<dbReference type="EC" id="3.4.23.-" evidence="7"/>
<dbReference type="EMBL" id="AC000132">
    <property type="protein sequence ID" value="AAB60729.1"/>
    <property type="molecule type" value="Genomic_DNA"/>
</dbReference>
<dbReference type="EMBL" id="CP002684">
    <property type="protein sequence ID" value="AEE28488.1"/>
    <property type="molecule type" value="Genomic_DNA"/>
</dbReference>
<dbReference type="EMBL" id="AY088375">
    <property type="protein sequence ID" value="AAM65914.1"/>
    <property type="molecule type" value="mRNA"/>
</dbReference>
<dbReference type="EMBL" id="AF370291">
    <property type="protein sequence ID" value="AAK44106.2"/>
    <property type="molecule type" value="mRNA"/>
</dbReference>
<dbReference type="EMBL" id="BT002332">
    <property type="protein sequence ID" value="AAN86165.1"/>
    <property type="molecule type" value="mRNA"/>
</dbReference>
<dbReference type="PIR" id="D86231">
    <property type="entry name" value="D86231"/>
</dbReference>
<dbReference type="RefSeq" id="NP_563851.1">
    <property type="nucleotide sequence ID" value="NM_100847.3"/>
</dbReference>
<dbReference type="SMR" id="O04496"/>
<dbReference type="FunCoup" id="O04496">
    <property type="interactions" value="294"/>
</dbReference>
<dbReference type="STRING" id="3702.O04496"/>
<dbReference type="MEROPS" id="A01.A36"/>
<dbReference type="MEROPS" id="T03.008"/>
<dbReference type="GlyCosmos" id="O04496">
    <property type="glycosylation" value="6 sites, No reported glycans"/>
</dbReference>
<dbReference type="GlyGen" id="O04496">
    <property type="glycosylation" value="6 sites"/>
</dbReference>
<dbReference type="PaxDb" id="3702-AT1G09750.1"/>
<dbReference type="ProMEX" id="O04496"/>
<dbReference type="ProteomicsDB" id="243288"/>
<dbReference type="EnsemblPlants" id="AT1G09750.1">
    <property type="protein sequence ID" value="AT1G09750.1"/>
    <property type="gene ID" value="AT1G09750"/>
</dbReference>
<dbReference type="GeneID" id="837504"/>
<dbReference type="Gramene" id="AT1G09750.1">
    <property type="protein sequence ID" value="AT1G09750.1"/>
    <property type="gene ID" value="AT1G09750"/>
</dbReference>
<dbReference type="KEGG" id="ath:AT1G09750"/>
<dbReference type="Araport" id="AT1G09750"/>
<dbReference type="TAIR" id="AT1G09750"/>
<dbReference type="eggNOG" id="KOG1339">
    <property type="taxonomic scope" value="Eukaryota"/>
</dbReference>
<dbReference type="HOGENOM" id="CLU_005738_5_1_1"/>
<dbReference type="InParanoid" id="O04496"/>
<dbReference type="OMA" id="LFQGQAC"/>
<dbReference type="OrthoDB" id="2747330at2759"/>
<dbReference type="PhylomeDB" id="O04496"/>
<dbReference type="PRO" id="PR:O04496"/>
<dbReference type="Proteomes" id="UP000006548">
    <property type="component" value="Chromosome 1"/>
</dbReference>
<dbReference type="ExpressionAtlas" id="O04496">
    <property type="expression patterns" value="baseline and differential"/>
</dbReference>
<dbReference type="GO" id="GO:0048046">
    <property type="term" value="C:apoplast"/>
    <property type="evidence" value="ECO:0007005"/>
    <property type="project" value="TAIR"/>
</dbReference>
<dbReference type="GO" id="GO:0099503">
    <property type="term" value="C:secretory vesicle"/>
    <property type="evidence" value="ECO:0007005"/>
    <property type="project" value="TAIR"/>
</dbReference>
<dbReference type="GO" id="GO:0004190">
    <property type="term" value="F:aspartic-type endopeptidase activity"/>
    <property type="evidence" value="ECO:0007669"/>
    <property type="project" value="UniProtKB-KW"/>
</dbReference>
<dbReference type="GO" id="GO:0000166">
    <property type="term" value="F:nucleotide binding"/>
    <property type="evidence" value="ECO:0007669"/>
    <property type="project" value="UniProtKB-KW"/>
</dbReference>
<dbReference type="GO" id="GO:0006508">
    <property type="term" value="P:proteolysis"/>
    <property type="evidence" value="ECO:0007669"/>
    <property type="project" value="UniProtKB-KW"/>
</dbReference>
<dbReference type="GO" id="GO:0043067">
    <property type="term" value="P:regulation of programmed cell death"/>
    <property type="evidence" value="ECO:0007669"/>
    <property type="project" value="EnsemblPlants"/>
</dbReference>
<dbReference type="GO" id="GO:0009627">
    <property type="term" value="P:systemic acquired resistance"/>
    <property type="evidence" value="ECO:0000270"/>
    <property type="project" value="TAIR"/>
</dbReference>
<dbReference type="FunFam" id="2.40.70.10:FF:000022">
    <property type="entry name" value="Aspartyl protease AED3"/>
    <property type="match status" value="1"/>
</dbReference>
<dbReference type="FunFam" id="2.40.70.10:FF:000040">
    <property type="entry name" value="aspartyl protease AED3"/>
    <property type="match status" value="1"/>
</dbReference>
<dbReference type="Gene3D" id="2.40.70.10">
    <property type="entry name" value="Acid Proteases"/>
    <property type="match status" value="2"/>
</dbReference>
<dbReference type="InterPro" id="IPR001461">
    <property type="entry name" value="Aspartic_peptidase_A1"/>
</dbReference>
<dbReference type="InterPro" id="IPR033121">
    <property type="entry name" value="PEPTIDASE_A1"/>
</dbReference>
<dbReference type="InterPro" id="IPR021109">
    <property type="entry name" value="Peptidase_aspartic_dom_sf"/>
</dbReference>
<dbReference type="InterPro" id="IPR032799">
    <property type="entry name" value="TAXi_C"/>
</dbReference>
<dbReference type="InterPro" id="IPR032861">
    <property type="entry name" value="TAXi_N"/>
</dbReference>
<dbReference type="PANTHER" id="PTHR13683:SF839">
    <property type="entry name" value="ASPARTYL PROTEASE AED3-LIKE"/>
    <property type="match status" value="1"/>
</dbReference>
<dbReference type="PANTHER" id="PTHR13683">
    <property type="entry name" value="ASPARTYL PROTEASES"/>
    <property type="match status" value="1"/>
</dbReference>
<dbReference type="Pfam" id="PF14541">
    <property type="entry name" value="TAXi_C"/>
    <property type="match status" value="1"/>
</dbReference>
<dbReference type="Pfam" id="PF14543">
    <property type="entry name" value="TAXi_N"/>
    <property type="match status" value="1"/>
</dbReference>
<dbReference type="SUPFAM" id="SSF50630">
    <property type="entry name" value="Acid proteases"/>
    <property type="match status" value="1"/>
</dbReference>
<dbReference type="PROSITE" id="PS00120">
    <property type="entry name" value="LIPASE_SER"/>
    <property type="match status" value="1"/>
</dbReference>
<dbReference type="PROSITE" id="PS51767">
    <property type="entry name" value="PEPTIDASE_A1"/>
    <property type="match status" value="1"/>
</dbReference>
<evidence type="ECO:0000250" key="1">
    <source>
        <dbReference type="UniProtKB" id="P42210"/>
    </source>
</evidence>
<evidence type="ECO:0000255" key="2"/>
<evidence type="ECO:0000255" key="3">
    <source>
        <dbReference type="PROSITE-ProRule" id="PRU00498"/>
    </source>
</evidence>
<evidence type="ECO:0000255" key="4">
    <source>
        <dbReference type="PROSITE-ProRule" id="PRU01103"/>
    </source>
</evidence>
<evidence type="ECO:0000269" key="5">
    <source>
    </source>
</evidence>
<evidence type="ECO:0000303" key="6">
    <source>
    </source>
</evidence>
<evidence type="ECO:0000305" key="7"/>
<evidence type="ECO:0000312" key="8">
    <source>
        <dbReference type="Araport" id="AT1G09750"/>
    </source>
</evidence>
<evidence type="ECO:0000312" key="9">
    <source>
        <dbReference type="EMBL" id="AAB60729.1"/>
    </source>
</evidence>
<keyword id="KW-0052">Apoplast</keyword>
<keyword id="KW-0064">Aspartyl protease</keyword>
<keyword id="KW-1015">Disulfide bond</keyword>
<keyword id="KW-0325">Glycoprotein</keyword>
<keyword id="KW-0378">Hydrolase</keyword>
<keyword id="KW-0547">Nucleotide-binding</keyword>
<keyword id="KW-0645">Protease</keyword>
<keyword id="KW-1185">Reference proteome</keyword>
<keyword id="KW-0964">Secreted</keyword>
<keyword id="KW-0732">Signal</keyword>
<accession>O04496</accession>
<accession>Q94K53</accession>
<sequence length="449" mass="47661">MASSSLHFFFFLTLLLPFTFTTATRDTCATAAPDGSDDLSIIPINAKCSPFAPTHVSASVIDTVLHMASSDSHRLTYLSSLVAGKPKPTSVPVASGNQLHIGNYVVRAKLGTPPQLMFMVLDTSNDAVWLPCSGCSGCSNASTSFNTNSSSTYSTVSCSTAQCTQARGLTCPSSSPQPSVCSFNQSYGGDSSFSASLVQDTLTLAPDVIPNFSFGCINSASGNSLPPQGLMGLGRGPMSLVSQTTSLYSGVFSYCLPSFRSFYFSGSLKLGLLGQPKSIRYTPLLRNPRRPSLYYVNLTGVSVGSVQVPVDPVYLTFDANSGAGTIIDSGTVITRFAQPVYEAIRDEFRKQVNVSSFSTLGAFDTCFSADNENVAPKITLHMTSLDLKLPMENTLIHSSAGTLTCLSMAGIRQNANAVLNVIANLQQQNLRILFDVPNSRIGIAPEPCN</sequence>
<name>AED3_ARATH</name>
<comment type="subcellular location">
    <subcellularLocation>
        <location evidence="5">Secreted</location>
        <location evidence="5">Extracellular space</location>
        <location evidence="5">Apoplast</location>
    </subcellularLocation>
</comment>
<comment type="similarity">
    <text evidence="7">Belongs to the peptidase A1 family.</text>
</comment>
<organism>
    <name type="scientific">Arabidopsis thaliana</name>
    <name type="common">Mouse-ear cress</name>
    <dbReference type="NCBI Taxonomy" id="3702"/>
    <lineage>
        <taxon>Eukaryota</taxon>
        <taxon>Viridiplantae</taxon>
        <taxon>Streptophyta</taxon>
        <taxon>Embryophyta</taxon>
        <taxon>Tracheophyta</taxon>
        <taxon>Spermatophyta</taxon>
        <taxon>Magnoliopsida</taxon>
        <taxon>eudicotyledons</taxon>
        <taxon>Gunneridae</taxon>
        <taxon>Pentapetalae</taxon>
        <taxon>rosids</taxon>
        <taxon>malvids</taxon>
        <taxon>Brassicales</taxon>
        <taxon>Brassicaceae</taxon>
        <taxon>Camelineae</taxon>
        <taxon>Arabidopsis</taxon>
    </lineage>
</organism>
<reference key="1">
    <citation type="journal article" date="2000" name="Nature">
        <title>Sequence and analysis of chromosome 1 of the plant Arabidopsis thaliana.</title>
        <authorList>
            <person name="Theologis A."/>
            <person name="Ecker J.R."/>
            <person name="Palm C.J."/>
            <person name="Federspiel N.A."/>
            <person name="Kaul S."/>
            <person name="White O."/>
            <person name="Alonso J."/>
            <person name="Altafi H."/>
            <person name="Araujo R."/>
            <person name="Bowman C.L."/>
            <person name="Brooks S.Y."/>
            <person name="Buehler E."/>
            <person name="Chan A."/>
            <person name="Chao Q."/>
            <person name="Chen H."/>
            <person name="Cheuk R.F."/>
            <person name="Chin C.W."/>
            <person name="Chung M.K."/>
            <person name="Conn L."/>
            <person name="Conway A.B."/>
            <person name="Conway A.R."/>
            <person name="Creasy T.H."/>
            <person name="Dewar K."/>
            <person name="Dunn P."/>
            <person name="Etgu P."/>
            <person name="Feldblyum T.V."/>
            <person name="Feng J.-D."/>
            <person name="Fong B."/>
            <person name="Fujii C.Y."/>
            <person name="Gill J.E."/>
            <person name="Goldsmith A.D."/>
            <person name="Haas B."/>
            <person name="Hansen N.F."/>
            <person name="Hughes B."/>
            <person name="Huizar L."/>
            <person name="Hunter J.L."/>
            <person name="Jenkins J."/>
            <person name="Johnson-Hopson C."/>
            <person name="Khan S."/>
            <person name="Khaykin E."/>
            <person name="Kim C.J."/>
            <person name="Koo H.L."/>
            <person name="Kremenetskaia I."/>
            <person name="Kurtz D.B."/>
            <person name="Kwan A."/>
            <person name="Lam B."/>
            <person name="Langin-Hooper S."/>
            <person name="Lee A."/>
            <person name="Lee J.M."/>
            <person name="Lenz C.A."/>
            <person name="Li J.H."/>
            <person name="Li Y.-P."/>
            <person name="Lin X."/>
            <person name="Liu S.X."/>
            <person name="Liu Z.A."/>
            <person name="Luros J.S."/>
            <person name="Maiti R."/>
            <person name="Marziali A."/>
            <person name="Militscher J."/>
            <person name="Miranda M."/>
            <person name="Nguyen M."/>
            <person name="Nierman W.C."/>
            <person name="Osborne B.I."/>
            <person name="Pai G."/>
            <person name="Peterson J."/>
            <person name="Pham P.K."/>
            <person name="Rizzo M."/>
            <person name="Rooney T."/>
            <person name="Rowley D."/>
            <person name="Sakano H."/>
            <person name="Salzberg S.L."/>
            <person name="Schwartz J.R."/>
            <person name="Shinn P."/>
            <person name="Southwick A.M."/>
            <person name="Sun H."/>
            <person name="Tallon L.J."/>
            <person name="Tambunga G."/>
            <person name="Toriumi M.J."/>
            <person name="Town C.D."/>
            <person name="Utterback T."/>
            <person name="Van Aken S."/>
            <person name="Vaysberg M."/>
            <person name="Vysotskaia V.S."/>
            <person name="Walker M."/>
            <person name="Wu D."/>
            <person name="Yu G."/>
            <person name="Fraser C.M."/>
            <person name="Venter J.C."/>
            <person name="Davis R.W."/>
        </authorList>
    </citation>
    <scope>NUCLEOTIDE SEQUENCE [LARGE SCALE GENOMIC DNA]</scope>
    <source>
        <strain>cv. Columbia</strain>
    </source>
</reference>
<reference key="2">
    <citation type="journal article" date="2017" name="Plant J.">
        <title>Araport11: a complete reannotation of the Arabidopsis thaliana reference genome.</title>
        <authorList>
            <person name="Cheng C.Y."/>
            <person name="Krishnakumar V."/>
            <person name="Chan A.P."/>
            <person name="Thibaud-Nissen F."/>
            <person name="Schobel S."/>
            <person name="Town C.D."/>
        </authorList>
    </citation>
    <scope>GENOME REANNOTATION</scope>
    <source>
        <strain>cv. Columbia</strain>
    </source>
</reference>
<reference key="3">
    <citation type="journal article" date="2003" name="Science">
        <title>Empirical analysis of transcriptional activity in the Arabidopsis genome.</title>
        <authorList>
            <person name="Yamada K."/>
            <person name="Lim J."/>
            <person name="Dale J.M."/>
            <person name="Chen H."/>
            <person name="Shinn P."/>
            <person name="Palm C.J."/>
            <person name="Southwick A.M."/>
            <person name="Wu H.C."/>
            <person name="Kim C.J."/>
            <person name="Nguyen M."/>
            <person name="Pham P.K."/>
            <person name="Cheuk R.F."/>
            <person name="Karlin-Newmann G."/>
            <person name="Liu S.X."/>
            <person name="Lam B."/>
            <person name="Sakano H."/>
            <person name="Wu T."/>
            <person name="Yu G."/>
            <person name="Miranda M."/>
            <person name="Quach H.L."/>
            <person name="Tripp M."/>
            <person name="Chang C.H."/>
            <person name="Lee J.M."/>
            <person name="Toriumi M.J."/>
            <person name="Chan M.M."/>
            <person name="Tang C.C."/>
            <person name="Onodera C.S."/>
            <person name="Deng J.M."/>
            <person name="Akiyama K."/>
            <person name="Ansari Y."/>
            <person name="Arakawa T."/>
            <person name="Banh J."/>
            <person name="Banno F."/>
            <person name="Bowser L."/>
            <person name="Brooks S.Y."/>
            <person name="Carninci P."/>
            <person name="Chao Q."/>
            <person name="Choy N."/>
            <person name="Enju A."/>
            <person name="Goldsmith A.D."/>
            <person name="Gurjal M."/>
            <person name="Hansen N.F."/>
            <person name="Hayashizaki Y."/>
            <person name="Johnson-Hopson C."/>
            <person name="Hsuan V.W."/>
            <person name="Iida K."/>
            <person name="Karnes M."/>
            <person name="Khan S."/>
            <person name="Koesema E."/>
            <person name="Ishida J."/>
            <person name="Jiang P.X."/>
            <person name="Jones T."/>
            <person name="Kawai J."/>
            <person name="Kamiya A."/>
            <person name="Meyers C."/>
            <person name="Nakajima M."/>
            <person name="Narusaka M."/>
            <person name="Seki M."/>
            <person name="Sakurai T."/>
            <person name="Satou M."/>
            <person name="Tamse R."/>
            <person name="Vaysberg M."/>
            <person name="Wallender E.K."/>
            <person name="Wong C."/>
            <person name="Yamamura Y."/>
            <person name="Yuan S."/>
            <person name="Shinozaki K."/>
            <person name="Davis R.W."/>
            <person name="Theologis A."/>
            <person name="Ecker J.R."/>
        </authorList>
    </citation>
    <scope>NUCLEOTIDE SEQUENCE [LARGE SCALE MRNA]</scope>
    <source>
        <strain>cv. Columbia</strain>
    </source>
</reference>
<reference key="4">
    <citation type="submission" date="2002-03" db="EMBL/GenBank/DDBJ databases">
        <title>Full-length cDNA from Arabidopsis thaliana.</title>
        <authorList>
            <person name="Brover V.V."/>
            <person name="Troukhan M.E."/>
            <person name="Alexandrov N.A."/>
            <person name="Lu Y.-P."/>
            <person name="Flavell R.B."/>
            <person name="Feldmann K.A."/>
        </authorList>
    </citation>
    <scope>NUCLEOTIDE SEQUENCE [LARGE SCALE MRNA]</scope>
</reference>
<reference key="5">
    <citation type="journal article" date="2014" name="Plant Physiol.">
        <title>Contrasting roles of the apoplastic aspartyl protease APOPLASTIC, ENHANCED DISEASE SUSCEPTIBILITY1-DEPENDENT1 and LEGUME LECTIN-LIKE PROTEIN1 in Arabidopsis systemic acquired resistance.</title>
        <authorList>
            <person name="Breitenbach H.H."/>
            <person name="Wenig M."/>
            <person name="Wittek F."/>
            <person name="Jorda L."/>
            <person name="Maldonado-Alconada A.M."/>
            <person name="Sarioglu H."/>
            <person name="Colby T."/>
            <person name="Knappe C."/>
            <person name="Bichlmeier M."/>
            <person name="Pabst E."/>
            <person name="Mackey D."/>
            <person name="Parker J.E."/>
            <person name="Vlot A.C."/>
        </authorList>
    </citation>
    <scope>IDENTIFICATION BY MASS SPECTROMETRY</scope>
    <scope>SUBCELLULAR LOCATION</scope>
</reference>
<gene>
    <name evidence="6" type="primary">AED3</name>
    <name evidence="8" type="ordered locus">At1g09750</name>
    <name evidence="9" type="ORF">F21M12.13</name>
</gene>
<proteinExistence type="evidence at protein level"/>
<protein>
    <recommendedName>
        <fullName evidence="6">Aspartyl protease AED3</fullName>
        <ecNumber evidence="7">3.4.23.-</ecNumber>
    </recommendedName>
    <alternativeName>
        <fullName evidence="6">Apoplastic EDS1-dependent protein 3</fullName>
    </alternativeName>
</protein>
<feature type="signal peptide" evidence="2">
    <location>
        <begin position="1"/>
        <end position="23"/>
    </location>
</feature>
<feature type="chain" id="PRO_5005928664" description="Aspartyl protease AED3" evidence="2">
    <location>
        <begin position="24"/>
        <end position="449"/>
    </location>
</feature>
<feature type="domain" description="Peptidase A1" evidence="4">
    <location>
        <begin position="104"/>
        <end position="444"/>
    </location>
</feature>
<feature type="active site" evidence="4">
    <location>
        <position position="122"/>
    </location>
</feature>
<feature type="active site" evidence="4">
    <location>
        <position position="328"/>
    </location>
</feature>
<feature type="glycosylation site" description="N-linked (GlcNAc...) asparagine" evidence="3">
    <location>
        <position position="140"/>
    </location>
</feature>
<feature type="glycosylation site" description="N-linked (GlcNAc...) asparagine" evidence="3">
    <location>
        <position position="148"/>
    </location>
</feature>
<feature type="glycosylation site" description="N-linked (GlcNAc...) asparagine" evidence="3">
    <location>
        <position position="184"/>
    </location>
</feature>
<feature type="glycosylation site" description="N-linked (GlcNAc...) asparagine" evidence="3">
    <location>
        <position position="211"/>
    </location>
</feature>
<feature type="glycosylation site" description="N-linked (GlcNAc...) asparagine" evidence="3">
    <location>
        <position position="297"/>
    </location>
</feature>
<feature type="glycosylation site" description="N-linked (GlcNAc...) asparagine" evidence="3">
    <location>
        <position position="353"/>
    </location>
</feature>
<feature type="disulfide bond" evidence="1">
    <location>
        <begin position="132"/>
        <end position="138"/>
    </location>
</feature>
<feature type="disulfide bond" evidence="4">
    <location>
        <begin position="366"/>
        <end position="405"/>
    </location>
</feature>